<dbReference type="EMBL" id="CU928163">
    <property type="protein sequence ID" value="CAR12822.1"/>
    <property type="molecule type" value="Genomic_DNA"/>
</dbReference>
<dbReference type="RefSeq" id="WP_000138717.1">
    <property type="nucleotide sequence ID" value="NC_011751.1"/>
</dbReference>
<dbReference type="RefSeq" id="YP_002412359.1">
    <property type="nucleotide sequence ID" value="NC_011751.1"/>
</dbReference>
<dbReference type="SMR" id="B7N4C9"/>
<dbReference type="STRING" id="585056.ECUMN_1617"/>
<dbReference type="KEGG" id="eum:ECUMN_1617"/>
<dbReference type="PATRIC" id="fig|585056.7.peg.1809"/>
<dbReference type="HOGENOM" id="CLU_057693_2_0_6"/>
<dbReference type="Proteomes" id="UP000007097">
    <property type="component" value="Chromosome"/>
</dbReference>
<dbReference type="GO" id="GO:0005886">
    <property type="term" value="C:plasma membrane"/>
    <property type="evidence" value="ECO:0007669"/>
    <property type="project" value="UniProtKB-SubCell"/>
</dbReference>
<dbReference type="HAMAP" id="MF_01085">
    <property type="entry name" value="UPF0283"/>
    <property type="match status" value="1"/>
</dbReference>
<dbReference type="InterPro" id="IPR021147">
    <property type="entry name" value="DUF697"/>
</dbReference>
<dbReference type="InterPro" id="IPR006507">
    <property type="entry name" value="UPF0283"/>
</dbReference>
<dbReference type="NCBIfam" id="TIGR01620">
    <property type="entry name" value="hyp_HI0043"/>
    <property type="match status" value="1"/>
</dbReference>
<dbReference type="PANTHER" id="PTHR39342">
    <property type="entry name" value="UPF0283 MEMBRANE PROTEIN YCJF"/>
    <property type="match status" value="1"/>
</dbReference>
<dbReference type="PANTHER" id="PTHR39342:SF1">
    <property type="entry name" value="UPF0283 MEMBRANE PROTEIN YCJF"/>
    <property type="match status" value="1"/>
</dbReference>
<dbReference type="Pfam" id="PF05128">
    <property type="entry name" value="DUF697"/>
    <property type="match status" value="1"/>
</dbReference>
<accession>B7N4C9</accession>
<reference key="1">
    <citation type="journal article" date="2009" name="PLoS Genet.">
        <title>Organised genome dynamics in the Escherichia coli species results in highly diverse adaptive paths.</title>
        <authorList>
            <person name="Touchon M."/>
            <person name="Hoede C."/>
            <person name="Tenaillon O."/>
            <person name="Barbe V."/>
            <person name="Baeriswyl S."/>
            <person name="Bidet P."/>
            <person name="Bingen E."/>
            <person name="Bonacorsi S."/>
            <person name="Bouchier C."/>
            <person name="Bouvet O."/>
            <person name="Calteau A."/>
            <person name="Chiapello H."/>
            <person name="Clermont O."/>
            <person name="Cruveiller S."/>
            <person name="Danchin A."/>
            <person name="Diard M."/>
            <person name="Dossat C."/>
            <person name="Karoui M.E."/>
            <person name="Frapy E."/>
            <person name="Garry L."/>
            <person name="Ghigo J.M."/>
            <person name="Gilles A.M."/>
            <person name="Johnson J."/>
            <person name="Le Bouguenec C."/>
            <person name="Lescat M."/>
            <person name="Mangenot S."/>
            <person name="Martinez-Jehanne V."/>
            <person name="Matic I."/>
            <person name="Nassif X."/>
            <person name="Oztas S."/>
            <person name="Petit M.A."/>
            <person name="Pichon C."/>
            <person name="Rouy Z."/>
            <person name="Ruf C.S."/>
            <person name="Schneider D."/>
            <person name="Tourret J."/>
            <person name="Vacherie B."/>
            <person name="Vallenet D."/>
            <person name="Medigue C."/>
            <person name="Rocha E.P.C."/>
            <person name="Denamur E."/>
        </authorList>
    </citation>
    <scope>NUCLEOTIDE SEQUENCE [LARGE SCALE GENOMIC DNA]</scope>
    <source>
        <strain>UMN026 / ExPEC</strain>
    </source>
</reference>
<organism>
    <name type="scientific">Escherichia coli O17:K52:H18 (strain UMN026 / ExPEC)</name>
    <dbReference type="NCBI Taxonomy" id="585056"/>
    <lineage>
        <taxon>Bacteria</taxon>
        <taxon>Pseudomonadati</taxon>
        <taxon>Pseudomonadota</taxon>
        <taxon>Gammaproteobacteria</taxon>
        <taxon>Enterobacterales</taxon>
        <taxon>Enterobacteriaceae</taxon>
        <taxon>Escherichia</taxon>
    </lineage>
</organism>
<name>YCJF_ECOLU</name>
<proteinExistence type="inferred from homology"/>
<feature type="chain" id="PRO_1000136885" description="UPF0283 membrane protein YcjF">
    <location>
        <begin position="1"/>
        <end position="353"/>
    </location>
</feature>
<feature type="transmembrane region" description="Helical" evidence="1">
    <location>
        <begin position="70"/>
        <end position="90"/>
    </location>
</feature>
<feature type="transmembrane region" description="Helical" evidence="1">
    <location>
        <begin position="100"/>
        <end position="120"/>
    </location>
</feature>
<feature type="transmembrane region" description="Helical" evidence="1">
    <location>
        <begin position="213"/>
        <end position="233"/>
    </location>
</feature>
<keyword id="KW-0997">Cell inner membrane</keyword>
<keyword id="KW-1003">Cell membrane</keyword>
<keyword id="KW-0472">Membrane</keyword>
<keyword id="KW-0812">Transmembrane</keyword>
<keyword id="KW-1133">Transmembrane helix</keyword>
<sequence length="353" mass="39361">MTEPLKPRIDFDGPLEVDQNPKFRAQQTFDENQAQNFAPATLDEAPEEEGQVEAVMDAALRPKRSLWRKMVMGGLALFGASVVGQGVQWTMNAWQTQDWVALGGCAAGALIIGAGVGSVVTEWRRLWRLRQRAHERDEARDLLHSHGTGKGRAFCEKLAQQAGIDQSHPALQRWYASIHETQNDREVVSLYAHLVQPVLDAQARREISRSAAESTLMIAVSPLALVDMAFIAWRNLRLINRIATLYGIELGYYSRLRLFKLVLLNIAFAGASELVREVGMDWMSQDLAARLSTRAAQGIGAGLLTARLGIKAMELCRPLPWIDDDKPRLGDFRRQLIGQVKETLQKGKTPSEK</sequence>
<protein>
    <recommendedName>
        <fullName evidence="1">UPF0283 membrane protein YcjF</fullName>
    </recommendedName>
</protein>
<evidence type="ECO:0000255" key="1">
    <source>
        <dbReference type="HAMAP-Rule" id="MF_01085"/>
    </source>
</evidence>
<comment type="subcellular location">
    <subcellularLocation>
        <location evidence="1">Cell inner membrane</location>
        <topology evidence="1">Multi-pass membrane protein</topology>
    </subcellularLocation>
</comment>
<comment type="similarity">
    <text evidence="1">Belongs to the UPF0283 family.</text>
</comment>
<gene>
    <name evidence="1" type="primary">ycjF</name>
    <name type="ordered locus">ECUMN_1617</name>
</gene>